<comment type="function">
    <text evidence="1">Transfers the 4'-phosphopantetheine moiety from coenzyme A to a Ser of acyl-carrier-protein.</text>
</comment>
<comment type="catalytic activity">
    <reaction evidence="1">
        <text>apo-[ACP] + CoA = holo-[ACP] + adenosine 3',5'-bisphosphate + H(+)</text>
        <dbReference type="Rhea" id="RHEA:12068"/>
        <dbReference type="Rhea" id="RHEA-COMP:9685"/>
        <dbReference type="Rhea" id="RHEA-COMP:9690"/>
        <dbReference type="ChEBI" id="CHEBI:15378"/>
        <dbReference type="ChEBI" id="CHEBI:29999"/>
        <dbReference type="ChEBI" id="CHEBI:57287"/>
        <dbReference type="ChEBI" id="CHEBI:58343"/>
        <dbReference type="ChEBI" id="CHEBI:64479"/>
        <dbReference type="EC" id="2.7.8.7"/>
    </reaction>
</comment>
<comment type="cofactor">
    <cofactor evidence="1">
        <name>Mg(2+)</name>
        <dbReference type="ChEBI" id="CHEBI:18420"/>
    </cofactor>
</comment>
<comment type="subcellular location">
    <subcellularLocation>
        <location evidence="1">Cytoplasm</location>
    </subcellularLocation>
</comment>
<comment type="similarity">
    <text evidence="1">Belongs to the P-Pant transferase superfamily. AcpS family.</text>
</comment>
<gene>
    <name evidence="1" type="primary">acpS</name>
    <name type="synonym">dpj</name>
    <name type="ordered locus">MW1995</name>
</gene>
<feature type="chain" id="PRO_0000175705" description="Holo-[acyl-carrier-protein] synthase">
    <location>
        <begin position="1"/>
        <end position="119"/>
    </location>
</feature>
<feature type="binding site" evidence="1">
    <location>
        <position position="8"/>
    </location>
    <ligand>
        <name>Mg(2+)</name>
        <dbReference type="ChEBI" id="CHEBI:18420"/>
    </ligand>
</feature>
<feature type="binding site" evidence="1">
    <location>
        <position position="59"/>
    </location>
    <ligand>
        <name>Mg(2+)</name>
        <dbReference type="ChEBI" id="CHEBI:18420"/>
    </ligand>
</feature>
<evidence type="ECO:0000255" key="1">
    <source>
        <dbReference type="HAMAP-Rule" id="MF_00101"/>
    </source>
</evidence>
<protein>
    <recommendedName>
        <fullName evidence="1">Holo-[acyl-carrier-protein] synthase</fullName>
        <shortName evidence="1">Holo-ACP synthase</shortName>
        <ecNumber evidence="1">2.7.8.7</ecNumber>
    </recommendedName>
    <alternativeName>
        <fullName evidence="1">4'-phosphopantetheinyl transferase AcpS</fullName>
    </alternativeName>
</protein>
<proteinExistence type="inferred from homology"/>
<dbReference type="EC" id="2.7.8.7" evidence="1"/>
<dbReference type="EMBL" id="BA000033">
    <property type="protein sequence ID" value="BAB95860.1"/>
    <property type="molecule type" value="Genomic_DNA"/>
</dbReference>
<dbReference type="RefSeq" id="WP_000581197.1">
    <property type="nucleotide sequence ID" value="NC_003923.1"/>
</dbReference>
<dbReference type="SMR" id="P63470"/>
<dbReference type="KEGG" id="sam:MW1995"/>
<dbReference type="HOGENOM" id="CLU_089696_1_2_9"/>
<dbReference type="GO" id="GO:0005737">
    <property type="term" value="C:cytoplasm"/>
    <property type="evidence" value="ECO:0007669"/>
    <property type="project" value="UniProtKB-SubCell"/>
</dbReference>
<dbReference type="GO" id="GO:0008897">
    <property type="term" value="F:holo-[acyl-carrier-protein] synthase activity"/>
    <property type="evidence" value="ECO:0007669"/>
    <property type="project" value="UniProtKB-UniRule"/>
</dbReference>
<dbReference type="GO" id="GO:0000287">
    <property type="term" value="F:magnesium ion binding"/>
    <property type="evidence" value="ECO:0007669"/>
    <property type="project" value="UniProtKB-UniRule"/>
</dbReference>
<dbReference type="GO" id="GO:0006633">
    <property type="term" value="P:fatty acid biosynthetic process"/>
    <property type="evidence" value="ECO:0007669"/>
    <property type="project" value="UniProtKB-UniRule"/>
</dbReference>
<dbReference type="Gene3D" id="3.90.470.20">
    <property type="entry name" value="4'-phosphopantetheinyl transferase domain"/>
    <property type="match status" value="1"/>
</dbReference>
<dbReference type="HAMAP" id="MF_00101">
    <property type="entry name" value="AcpS"/>
    <property type="match status" value="1"/>
</dbReference>
<dbReference type="InterPro" id="IPR008278">
    <property type="entry name" value="4-PPantetheinyl_Trfase_dom"/>
</dbReference>
<dbReference type="InterPro" id="IPR037143">
    <property type="entry name" value="4-PPantetheinyl_Trfase_dom_sf"/>
</dbReference>
<dbReference type="InterPro" id="IPR002582">
    <property type="entry name" value="ACPS"/>
</dbReference>
<dbReference type="InterPro" id="IPR004568">
    <property type="entry name" value="Ppantetheine-prot_Trfase_dom"/>
</dbReference>
<dbReference type="NCBIfam" id="TIGR00516">
    <property type="entry name" value="acpS"/>
    <property type="match status" value="1"/>
</dbReference>
<dbReference type="NCBIfam" id="TIGR00556">
    <property type="entry name" value="pantethn_trn"/>
    <property type="match status" value="1"/>
</dbReference>
<dbReference type="Pfam" id="PF01648">
    <property type="entry name" value="ACPS"/>
    <property type="match status" value="1"/>
</dbReference>
<dbReference type="SUPFAM" id="SSF56214">
    <property type="entry name" value="4'-phosphopantetheinyl transferase"/>
    <property type="match status" value="1"/>
</dbReference>
<name>ACPS_STAAW</name>
<reference key="1">
    <citation type="journal article" date="2002" name="Lancet">
        <title>Genome and virulence determinants of high virulence community-acquired MRSA.</title>
        <authorList>
            <person name="Baba T."/>
            <person name="Takeuchi F."/>
            <person name="Kuroda M."/>
            <person name="Yuzawa H."/>
            <person name="Aoki K."/>
            <person name="Oguchi A."/>
            <person name="Nagai Y."/>
            <person name="Iwama N."/>
            <person name="Asano K."/>
            <person name="Naimi T."/>
            <person name="Kuroda H."/>
            <person name="Cui L."/>
            <person name="Yamamoto K."/>
            <person name="Hiramatsu K."/>
        </authorList>
    </citation>
    <scope>NUCLEOTIDE SEQUENCE [LARGE SCALE GENOMIC DNA]</scope>
    <source>
        <strain>MW2</strain>
    </source>
</reference>
<keyword id="KW-0963">Cytoplasm</keyword>
<keyword id="KW-0275">Fatty acid biosynthesis</keyword>
<keyword id="KW-0276">Fatty acid metabolism</keyword>
<keyword id="KW-0444">Lipid biosynthesis</keyword>
<keyword id="KW-0443">Lipid metabolism</keyword>
<keyword id="KW-0460">Magnesium</keyword>
<keyword id="KW-0479">Metal-binding</keyword>
<keyword id="KW-0808">Transferase</keyword>
<accession>P63470</accession>
<accession>Q99SI4</accession>
<organism>
    <name type="scientific">Staphylococcus aureus (strain MW2)</name>
    <dbReference type="NCBI Taxonomy" id="196620"/>
    <lineage>
        <taxon>Bacteria</taxon>
        <taxon>Bacillati</taxon>
        <taxon>Bacillota</taxon>
        <taxon>Bacilli</taxon>
        <taxon>Bacillales</taxon>
        <taxon>Staphylococcaceae</taxon>
        <taxon>Staphylococcus</taxon>
    </lineage>
</organism>
<sequence>MIHGIGVDLIEIDRIKVLYSKQPKLVERILTKNEQHKFNNFTHEQRKIEFLAGRFATKEAFSKALGTGLGKHVAFNDIDCYNDELGKPKIDYEGFIVHVSISHTEHYAMSQVVLEKSAF</sequence>